<organism>
    <name type="scientific">Clostridium perfringens (strain SM101 / Type A)</name>
    <dbReference type="NCBI Taxonomy" id="289380"/>
    <lineage>
        <taxon>Bacteria</taxon>
        <taxon>Bacillati</taxon>
        <taxon>Bacillota</taxon>
        <taxon>Clostridia</taxon>
        <taxon>Eubacteriales</taxon>
        <taxon>Clostridiaceae</taxon>
        <taxon>Clostridium</taxon>
    </lineage>
</organism>
<comment type="catalytic activity">
    <reaction evidence="1">
        <text>butanoate + ATP = butanoyl phosphate + ADP</text>
        <dbReference type="Rhea" id="RHEA:13585"/>
        <dbReference type="ChEBI" id="CHEBI:17968"/>
        <dbReference type="ChEBI" id="CHEBI:30616"/>
        <dbReference type="ChEBI" id="CHEBI:58079"/>
        <dbReference type="ChEBI" id="CHEBI:456216"/>
        <dbReference type="EC" id="2.7.2.7"/>
    </reaction>
</comment>
<comment type="subcellular location">
    <subcellularLocation>
        <location evidence="1">Cytoplasm</location>
    </subcellularLocation>
</comment>
<comment type="similarity">
    <text evidence="1">Belongs to the acetokinase family.</text>
</comment>
<evidence type="ECO:0000255" key="1">
    <source>
        <dbReference type="HAMAP-Rule" id="MF_00542"/>
    </source>
</evidence>
<gene>
    <name evidence="1" type="primary">buk</name>
    <name type="ordered locus">CPR_2342</name>
</gene>
<proteinExistence type="inferred from homology"/>
<reference key="1">
    <citation type="journal article" date="2006" name="Genome Res.">
        <title>Skewed genomic variability in strains of the toxigenic bacterial pathogen, Clostridium perfringens.</title>
        <authorList>
            <person name="Myers G.S.A."/>
            <person name="Rasko D.A."/>
            <person name="Cheung J.K."/>
            <person name="Ravel J."/>
            <person name="Seshadri R."/>
            <person name="DeBoy R.T."/>
            <person name="Ren Q."/>
            <person name="Varga J."/>
            <person name="Awad M.M."/>
            <person name="Brinkac L.M."/>
            <person name="Daugherty S.C."/>
            <person name="Haft D.H."/>
            <person name="Dodson R.J."/>
            <person name="Madupu R."/>
            <person name="Nelson W.C."/>
            <person name="Rosovitz M.J."/>
            <person name="Sullivan S.A."/>
            <person name="Khouri H."/>
            <person name="Dimitrov G.I."/>
            <person name="Watkins K.L."/>
            <person name="Mulligan S."/>
            <person name="Benton J."/>
            <person name="Radune D."/>
            <person name="Fisher D.J."/>
            <person name="Atkins H.S."/>
            <person name="Hiscox T."/>
            <person name="Jost B.H."/>
            <person name="Billington S.J."/>
            <person name="Songer J.G."/>
            <person name="McClane B.A."/>
            <person name="Titball R.W."/>
            <person name="Rood J.I."/>
            <person name="Melville S.B."/>
            <person name="Paulsen I.T."/>
        </authorList>
    </citation>
    <scope>NUCLEOTIDE SEQUENCE [LARGE SCALE GENOMIC DNA]</scope>
    <source>
        <strain>SM101 / Type A</strain>
    </source>
</reference>
<protein>
    <recommendedName>
        <fullName evidence="1">Probable butyrate kinase</fullName>
        <shortName evidence="1">BK</shortName>
        <ecNumber evidence="1">2.7.2.7</ecNumber>
    </recommendedName>
    <alternativeName>
        <fullName evidence="1">Branched-chain carboxylic acid kinase</fullName>
    </alternativeName>
</protein>
<sequence length="356" mass="38702">MAYKLLIINPGSTSTKIGVYEGEKEILEETLRHSAEEILKYDTIFDQLDFRKEVILKVLKEKGIDINELDAVVGRGGMLKPIEGGTYEVNEAMVEDLKIGVQGPHASNLGGILSNEIAKEIGKRAFIVDPVVVDEMEDVARLSGVPELPRKSKFHALNQKAVAKRYAKEHNTSYEDVNLIVVHMGGGVSVGAHRKGRVIDVNNALDGDGPFSPERAGGVPSGELLEMCFSGKYSKEEVYKKLVGKGGFVAYANTNDARDLIKLSQEGDEKGSLIFNAFIYQIAKEIGSMAVVLDGEVNAIVLTGGIAYSDYVTNAINKKVKWIAPMVVYGGEDELLALAQGAIRVLDGVEEAKIYK</sequence>
<accession>Q0SQK0</accession>
<keyword id="KW-0067">ATP-binding</keyword>
<keyword id="KW-0963">Cytoplasm</keyword>
<keyword id="KW-0418">Kinase</keyword>
<keyword id="KW-0547">Nucleotide-binding</keyword>
<keyword id="KW-0808">Transferase</keyword>
<name>BUK_CLOPS</name>
<feature type="chain" id="PRO_1000061067" description="Probable butyrate kinase">
    <location>
        <begin position="1"/>
        <end position="356"/>
    </location>
</feature>
<dbReference type="EC" id="2.7.2.7" evidence="1"/>
<dbReference type="EMBL" id="CP000312">
    <property type="protein sequence ID" value="ABG86354.1"/>
    <property type="molecule type" value="Genomic_DNA"/>
</dbReference>
<dbReference type="RefSeq" id="WP_011593110.1">
    <property type="nucleotide sequence ID" value="NC_008262.1"/>
</dbReference>
<dbReference type="SMR" id="Q0SQK0"/>
<dbReference type="KEGG" id="cpr:CPR_2342"/>
<dbReference type="Proteomes" id="UP000001824">
    <property type="component" value="Chromosome"/>
</dbReference>
<dbReference type="GO" id="GO:0005737">
    <property type="term" value="C:cytoplasm"/>
    <property type="evidence" value="ECO:0007669"/>
    <property type="project" value="UniProtKB-SubCell"/>
</dbReference>
<dbReference type="GO" id="GO:0008776">
    <property type="term" value="F:acetate kinase activity"/>
    <property type="evidence" value="ECO:0007669"/>
    <property type="project" value="TreeGrafter"/>
</dbReference>
<dbReference type="GO" id="GO:0005524">
    <property type="term" value="F:ATP binding"/>
    <property type="evidence" value="ECO:0007669"/>
    <property type="project" value="UniProtKB-KW"/>
</dbReference>
<dbReference type="GO" id="GO:0047761">
    <property type="term" value="F:butyrate kinase activity"/>
    <property type="evidence" value="ECO:0007669"/>
    <property type="project" value="UniProtKB-UniRule"/>
</dbReference>
<dbReference type="GO" id="GO:0006083">
    <property type="term" value="P:acetate metabolic process"/>
    <property type="evidence" value="ECO:0007669"/>
    <property type="project" value="TreeGrafter"/>
</dbReference>
<dbReference type="CDD" id="cd24011">
    <property type="entry name" value="ASKHA_NBD_BK"/>
    <property type="match status" value="1"/>
</dbReference>
<dbReference type="Gene3D" id="3.30.420.40">
    <property type="match status" value="2"/>
</dbReference>
<dbReference type="HAMAP" id="MF_00542">
    <property type="entry name" value="Butyrate_kinase"/>
    <property type="match status" value="1"/>
</dbReference>
<dbReference type="InterPro" id="IPR000890">
    <property type="entry name" value="Aliphatic_acid_kin_short-chain"/>
</dbReference>
<dbReference type="InterPro" id="IPR023865">
    <property type="entry name" value="Aliphatic_acid_kinase_CS"/>
</dbReference>
<dbReference type="InterPro" id="IPR043129">
    <property type="entry name" value="ATPase_NBD"/>
</dbReference>
<dbReference type="InterPro" id="IPR011245">
    <property type="entry name" value="Butyrate_kin"/>
</dbReference>
<dbReference type="NCBIfam" id="TIGR02707">
    <property type="entry name" value="butyr_kinase"/>
    <property type="match status" value="1"/>
</dbReference>
<dbReference type="NCBIfam" id="NF002834">
    <property type="entry name" value="PRK03011.1-5"/>
    <property type="match status" value="1"/>
</dbReference>
<dbReference type="PANTHER" id="PTHR21060">
    <property type="entry name" value="ACETATE KINASE"/>
    <property type="match status" value="1"/>
</dbReference>
<dbReference type="PANTHER" id="PTHR21060:SF3">
    <property type="entry name" value="BUTYRATE KINASE 2-RELATED"/>
    <property type="match status" value="1"/>
</dbReference>
<dbReference type="Pfam" id="PF00871">
    <property type="entry name" value="Acetate_kinase"/>
    <property type="match status" value="1"/>
</dbReference>
<dbReference type="PIRSF" id="PIRSF036458">
    <property type="entry name" value="Butyrate_kin"/>
    <property type="match status" value="1"/>
</dbReference>
<dbReference type="PRINTS" id="PR00471">
    <property type="entry name" value="ACETATEKNASE"/>
</dbReference>
<dbReference type="SUPFAM" id="SSF53067">
    <property type="entry name" value="Actin-like ATPase domain"/>
    <property type="match status" value="2"/>
</dbReference>
<dbReference type="PROSITE" id="PS01075">
    <property type="entry name" value="ACETATE_KINASE_1"/>
    <property type="match status" value="1"/>
</dbReference>
<dbReference type="PROSITE" id="PS01076">
    <property type="entry name" value="ACETATE_KINASE_2"/>
    <property type="match status" value="1"/>
</dbReference>